<name>209R_IIV6</name>
<organism>
    <name type="scientific">Invertebrate iridescent virus 6</name>
    <name type="common">IIV-6</name>
    <name type="synonym">Chilo iridescent virus</name>
    <dbReference type="NCBI Taxonomy" id="176652"/>
    <lineage>
        <taxon>Viruses</taxon>
        <taxon>Varidnaviria</taxon>
        <taxon>Bamfordvirae</taxon>
        <taxon>Nucleocytoviricota</taxon>
        <taxon>Megaviricetes</taxon>
        <taxon>Pimascovirales</taxon>
        <taxon>Iridoviridae</taxon>
        <taxon>Betairidovirinae</taxon>
        <taxon>Iridovirus</taxon>
    </lineage>
</organism>
<sequence>MDSLKASSAYKRIDTIPKLLEYMWSLFPNIIAIKNGSEKSTSILGSLNKKMYNPMIQNSVEFCDLLAKNILKIQPFAQGGFGQVGSLTIDEDKYNQPLKAIVISFKRYGGFEPFYVSVIIKLYLSNEPPKWSIGESSIDKGTFYISDPLSEMIFGSMLGHLYDLGVCPFFTKYFGAYLCKNEKTSIITEMATIELRKLISRNRNYGIAQKYPLSVINLLFQYVYGLFIMKSYYGMVHFDTQHRNLMATYIHNRDIKINEKIQSPYIYQGEDICNKSFFLFQTHLTSQNPRLNQNGADVPVFICIKNTGLLLKIIDYGVCVSYLNRSLVNPYKNDITISSIKKDLERINALNALNKTRESKSYSNTVDLQYTLTNIWEHMIKGLDSYTGQMAPDVNAPLDYKVALELLNDFSEKFFGESQYRLSNFLQDHPERQVQLTSLKNGGKGLAWVSYIHNTGIEKEEFNNPLRLLEGLINACGSEKNLRINASFKGSINQEISIYYLEPEIPSMIQNLGGLSDDNSVLLLASASDREKNLNLFNHYMNKSNLYKENCYDNVTKSTIQCKQIKSDIYKYSLSSLSSKKLYSPSSQHFIESLNSIPSDSSSSGSSRKSSPRGSPNLGEAPTNEEIFTTFEELPSENLIKRTGIFDYYQVQINPSAINLNRNSKGAQVYQKYQSWLDFKNIKDDKVGDYVETVFLHAFRLRGAVKSIQMDKRKDLWEGALEHFGTEGSAPNGGLAINGGYFIVPGNLNRLYPNLTNRDLFEPIGFSYDSKMLTNGTKLSFPSVYHNDLAFVFGSSSEGRESQINILSYTSFMNLHRTVDDTVRYEIKNTKGVDGLPEIFEETVKAIAMVPFISEDVDEDLIGTRPIKANGSEILDEDYTWAFCTGPILIWEGKVVFTENKMNTDLMVTNIEDKNSLNNEEREILINAVPNAKNSYKYRAAEGEGNQFYGMRHSHRYMVHNILALDAIGRPYFIFCEGRGFDSPGLDRVQLANLISVFGMKTAVSLDGGFSANAVYKDCDNSGNCRPLFALNDPEKRRLGLSLYIS</sequence>
<proteinExistence type="predicted"/>
<dbReference type="EMBL" id="AF303741">
    <property type="protein sequence ID" value="AAK82071.1"/>
    <property type="molecule type" value="Genomic_DNA"/>
</dbReference>
<dbReference type="RefSeq" id="NP_149672.1">
    <property type="nucleotide sequence ID" value="NC_003038.1"/>
</dbReference>
<dbReference type="KEGG" id="vg:1733366"/>
<dbReference type="OrthoDB" id="690at10239"/>
<dbReference type="Proteomes" id="UP000001359">
    <property type="component" value="Genome"/>
</dbReference>
<dbReference type="InterPro" id="IPR018711">
    <property type="entry name" value="NAGPA"/>
</dbReference>
<dbReference type="Pfam" id="PF09992">
    <property type="entry name" value="NAGPA"/>
    <property type="match status" value="1"/>
</dbReference>
<keyword id="KW-1185">Reference proteome</keyword>
<accession>Q8QZQ9</accession>
<organismHost>
    <name type="scientific">Acheta domesticus</name>
    <name type="common">House cricket</name>
    <dbReference type="NCBI Taxonomy" id="6997"/>
</organismHost>
<organismHost>
    <name type="scientific">Chilo suppressalis</name>
    <name type="common">Asiatic rice borer moth</name>
    <dbReference type="NCBI Taxonomy" id="168631"/>
</organismHost>
<organismHost>
    <name type="scientific">Gryllus bimaculatus</name>
    <name type="common">Two-spotted cricket</name>
    <dbReference type="NCBI Taxonomy" id="6999"/>
</organismHost>
<organismHost>
    <name type="scientific">Gryllus campestris</name>
    <dbReference type="NCBI Taxonomy" id="58607"/>
</organismHost>
<organismHost>
    <name type="scientific">Spodoptera frugiperda</name>
    <name type="common">Fall armyworm</name>
    <dbReference type="NCBI Taxonomy" id="7108"/>
</organismHost>
<reference key="1">
    <citation type="journal article" date="2001" name="Virology">
        <title>Analysis of the first complete DNA sequence of an invertebrate iridovirus: coding strategy of the genome of Chilo iridescent virus.</title>
        <authorList>
            <person name="Jakob N.J."/>
            <person name="Mueller K."/>
            <person name="Bahr U."/>
            <person name="Darai G."/>
        </authorList>
    </citation>
    <scope>NUCLEOTIDE SEQUENCE [LARGE SCALE GENOMIC DNA]</scope>
</reference>
<reference key="2">
    <citation type="journal article" date="2007" name="Virol. J.">
        <title>Comparative genomic analysis of the family Iridoviridae: re-annotating and defining the core set of iridovirus genes.</title>
        <authorList>
            <person name="Eaton H.E."/>
            <person name="Metcalf J."/>
            <person name="Penny E."/>
            <person name="Tcherepanov V."/>
            <person name="Upton C."/>
            <person name="Brunetti C.R."/>
        </authorList>
    </citation>
    <scope>GENOME REANNOTATION</scope>
</reference>
<evidence type="ECO:0000256" key="1">
    <source>
        <dbReference type="SAM" id="MobiDB-lite"/>
    </source>
</evidence>
<gene>
    <name type="ORF">IIV6-209R</name>
</gene>
<feature type="chain" id="PRO_0000378026" description="Uncharacterized protein 209R">
    <location>
        <begin position="1"/>
        <end position="1046"/>
    </location>
</feature>
<feature type="region of interest" description="Disordered" evidence="1">
    <location>
        <begin position="594"/>
        <end position="622"/>
    </location>
</feature>
<feature type="compositionally biased region" description="Low complexity" evidence="1">
    <location>
        <begin position="594"/>
        <end position="615"/>
    </location>
</feature>
<protein>
    <recommendedName>
        <fullName>Uncharacterized protein 209R</fullName>
    </recommendedName>
</protein>